<geneLocation type="chloroplast"/>
<evidence type="ECO:0000255" key="1">
    <source>
        <dbReference type="HAMAP-Rule" id="MF_01342"/>
    </source>
</evidence>
<evidence type="ECO:0000305" key="2"/>
<proteinExistence type="inferred from homology"/>
<keyword id="KW-0150">Chloroplast</keyword>
<keyword id="KW-0934">Plastid</keyword>
<keyword id="KW-0687">Ribonucleoprotein</keyword>
<keyword id="KW-0689">Ribosomal protein</keyword>
<protein>
    <recommendedName>
        <fullName evidence="1">Large ribosomal subunit protein uL16c</fullName>
    </recommendedName>
    <alternativeName>
        <fullName evidence="2">50S ribosomal protein L16, chloroplastic</fullName>
    </alternativeName>
</protein>
<accession>Q85WS6</accession>
<name>RK16_PINKO</name>
<comment type="subunit">
    <text evidence="1">Part of the 50S ribosomal subunit.</text>
</comment>
<comment type="subcellular location">
    <subcellularLocation>
        <location>Plastid</location>
        <location>Chloroplast</location>
    </subcellularLocation>
</comment>
<comment type="similarity">
    <text evidence="1">Belongs to the universal ribosomal protein uL16 family.</text>
</comment>
<sequence>MLSPKRTKFRKQHRGRMKGVSYRGNRICFGRFALQALEPAWITSGQIEAGRRTITRYARRGGKIWVRIFPDKPITMRPAETRMGSGKGSPEYWVSVIKPGRILYEMGGVSETVARAAARIAAYKMPIRTQFVTT</sequence>
<gene>
    <name evidence="1" type="primary">rpl16</name>
</gene>
<organism>
    <name type="scientific">Pinus koraiensis</name>
    <name type="common">Korean pine</name>
    <dbReference type="NCBI Taxonomy" id="88728"/>
    <lineage>
        <taxon>Eukaryota</taxon>
        <taxon>Viridiplantae</taxon>
        <taxon>Streptophyta</taxon>
        <taxon>Embryophyta</taxon>
        <taxon>Tracheophyta</taxon>
        <taxon>Spermatophyta</taxon>
        <taxon>Pinopsida</taxon>
        <taxon>Pinidae</taxon>
        <taxon>Conifers I</taxon>
        <taxon>Pinales</taxon>
        <taxon>Pinaceae</taxon>
        <taxon>Pinus</taxon>
        <taxon>Pinus subgen. Strobus</taxon>
    </lineage>
</organism>
<dbReference type="EMBL" id="AY228468">
    <property type="protein sequence ID" value="AAO74143.1"/>
    <property type="molecule type" value="Genomic_DNA"/>
</dbReference>
<dbReference type="RefSeq" id="NP_817228.1">
    <property type="nucleotide sequence ID" value="NC_004677.2"/>
</dbReference>
<dbReference type="SMR" id="Q85WS6"/>
<dbReference type="GeneID" id="5048611"/>
<dbReference type="GO" id="GO:0009507">
    <property type="term" value="C:chloroplast"/>
    <property type="evidence" value="ECO:0007669"/>
    <property type="project" value="UniProtKB-SubCell"/>
</dbReference>
<dbReference type="GO" id="GO:0005762">
    <property type="term" value="C:mitochondrial large ribosomal subunit"/>
    <property type="evidence" value="ECO:0007669"/>
    <property type="project" value="TreeGrafter"/>
</dbReference>
<dbReference type="GO" id="GO:0019843">
    <property type="term" value="F:rRNA binding"/>
    <property type="evidence" value="ECO:0007669"/>
    <property type="project" value="InterPro"/>
</dbReference>
<dbReference type="GO" id="GO:0003735">
    <property type="term" value="F:structural constituent of ribosome"/>
    <property type="evidence" value="ECO:0007669"/>
    <property type="project" value="InterPro"/>
</dbReference>
<dbReference type="GO" id="GO:0032543">
    <property type="term" value="P:mitochondrial translation"/>
    <property type="evidence" value="ECO:0007669"/>
    <property type="project" value="TreeGrafter"/>
</dbReference>
<dbReference type="CDD" id="cd01433">
    <property type="entry name" value="Ribosomal_L16_L10e"/>
    <property type="match status" value="1"/>
</dbReference>
<dbReference type="FunFam" id="3.90.1170.10:FF:000001">
    <property type="entry name" value="50S ribosomal protein L16"/>
    <property type="match status" value="1"/>
</dbReference>
<dbReference type="Gene3D" id="3.90.1170.10">
    <property type="entry name" value="Ribosomal protein L10e/L16"/>
    <property type="match status" value="1"/>
</dbReference>
<dbReference type="HAMAP" id="MF_01342">
    <property type="entry name" value="Ribosomal_uL16"/>
    <property type="match status" value="1"/>
</dbReference>
<dbReference type="InterPro" id="IPR047873">
    <property type="entry name" value="Ribosomal_uL16"/>
</dbReference>
<dbReference type="InterPro" id="IPR000114">
    <property type="entry name" value="Ribosomal_uL16_bact-type"/>
</dbReference>
<dbReference type="InterPro" id="IPR020798">
    <property type="entry name" value="Ribosomal_uL16_CS"/>
</dbReference>
<dbReference type="InterPro" id="IPR016180">
    <property type="entry name" value="Ribosomal_uL16_dom"/>
</dbReference>
<dbReference type="InterPro" id="IPR036920">
    <property type="entry name" value="Ribosomal_uL16_sf"/>
</dbReference>
<dbReference type="NCBIfam" id="TIGR01164">
    <property type="entry name" value="rplP_bact"/>
    <property type="match status" value="1"/>
</dbReference>
<dbReference type="PANTHER" id="PTHR12220">
    <property type="entry name" value="50S/60S RIBOSOMAL PROTEIN L16"/>
    <property type="match status" value="1"/>
</dbReference>
<dbReference type="PANTHER" id="PTHR12220:SF13">
    <property type="entry name" value="LARGE RIBOSOMAL SUBUNIT PROTEIN UL16M"/>
    <property type="match status" value="1"/>
</dbReference>
<dbReference type="Pfam" id="PF00252">
    <property type="entry name" value="Ribosomal_L16"/>
    <property type="match status" value="1"/>
</dbReference>
<dbReference type="PRINTS" id="PR00060">
    <property type="entry name" value="RIBOSOMALL16"/>
</dbReference>
<dbReference type="SUPFAM" id="SSF54686">
    <property type="entry name" value="Ribosomal protein L16p/L10e"/>
    <property type="match status" value="1"/>
</dbReference>
<dbReference type="PROSITE" id="PS00586">
    <property type="entry name" value="RIBOSOMAL_L16_1"/>
    <property type="match status" value="1"/>
</dbReference>
<dbReference type="PROSITE" id="PS00701">
    <property type="entry name" value="RIBOSOMAL_L16_2"/>
    <property type="match status" value="1"/>
</dbReference>
<reference key="1">
    <citation type="submission" date="2003-02" db="EMBL/GenBank/DDBJ databases">
        <title>Complete nucleotide sequence of Pinus koraiensis.</title>
        <authorList>
            <person name="Noh E.W."/>
            <person name="Lee J.S."/>
            <person name="Choi Y.I."/>
            <person name="Han M.S."/>
            <person name="Yi Y.S."/>
            <person name="Han S.U."/>
        </authorList>
    </citation>
    <scope>NUCLEOTIDE SEQUENCE [LARGE SCALE GENOMIC DNA]</scope>
    <source>
        <strain>KangWon16</strain>
    </source>
</reference>
<feature type="chain" id="PRO_0000062305" description="Large ribosomal subunit protein uL16c">
    <location>
        <begin position="1"/>
        <end position="134"/>
    </location>
</feature>